<reference key="1">
    <citation type="submission" date="2005-11" db="EMBL/GenBank/DDBJ databases">
        <authorList>
            <consortium name="NIH - Mammalian Gene Collection (MGC) project"/>
        </authorList>
    </citation>
    <scope>NUCLEOTIDE SEQUENCE [LARGE SCALE MRNA]</scope>
    <source>
        <strain>Crossbred X Angus</strain>
        <tissue>Liver</tissue>
    </source>
</reference>
<protein>
    <recommendedName>
        <fullName>Mediator of RNA polymerase II transcription subunit 27</fullName>
    </recommendedName>
    <alternativeName>
        <fullName>Cofactor required for Sp1 transcriptional activation subunit 8</fullName>
        <shortName>CRSP complex subunit 8</shortName>
    </alternativeName>
    <alternativeName>
        <fullName>Mediator complex subunit 27</fullName>
    </alternativeName>
</protein>
<organism>
    <name type="scientific">Bos taurus</name>
    <name type="common">Bovine</name>
    <dbReference type="NCBI Taxonomy" id="9913"/>
    <lineage>
        <taxon>Eukaryota</taxon>
        <taxon>Metazoa</taxon>
        <taxon>Chordata</taxon>
        <taxon>Craniata</taxon>
        <taxon>Vertebrata</taxon>
        <taxon>Euteleostomi</taxon>
        <taxon>Mammalia</taxon>
        <taxon>Eutheria</taxon>
        <taxon>Laurasiatheria</taxon>
        <taxon>Artiodactyla</taxon>
        <taxon>Ruminantia</taxon>
        <taxon>Pecora</taxon>
        <taxon>Bovidae</taxon>
        <taxon>Bovinae</taxon>
        <taxon>Bos</taxon>
    </lineage>
</organism>
<proteinExistence type="evidence at transcript level"/>
<gene>
    <name type="primary">MED27</name>
    <name type="synonym">CRSP8</name>
</gene>
<comment type="function">
    <text evidence="1">Component of the Mediator complex, a coactivator involved in the regulated transcription of nearly all RNA polymerase II-dependent genes. Mediator functions as a bridge to convey information from gene-specific regulatory proteins to the basal RNA polymerase II transcription machinery. Mediator is recruited to promoters by direct interactions with regulatory proteins and serves as a scaffold for the assembly of a functional preinitiation complex with RNA polymerase II and the general transcription factors (By similarity).</text>
</comment>
<comment type="subunit">
    <text evidence="1">Component of the Mediator complex, which is composed of MED1, MED4, MED6, MED7, MED8, MED9, MED10, MED11, MED12, MED13, MED13L, MED14, MED15, MED16, MED17, MED18, MED19, MED20, MED21, MED22, MED23, MED24, MED25, MED26, MED27, MED29, MED30, MED31, CCNC, CDK8 and CDC2L6/CDK11. The MED12, MED13, CCNC and CDK8 subunits form a distinct module termed the CDK8 module. Mediator containing the CDK8 module is less active than Mediator lacking this module in supporting transcriptional activation. Individual preparations of the Mediator complex lacking one or more distinct subunits have been variously termed ARC, CRSP, DRIP, PC2, SMCC and TRAP (By similarity).</text>
</comment>
<comment type="subcellular location">
    <subcellularLocation>
        <location evidence="1">Nucleus</location>
    </subcellularLocation>
</comment>
<comment type="similarity">
    <text evidence="3">Belongs to the Mediator complex subunit 27 family.</text>
</comment>
<keyword id="KW-0010">Activator</keyword>
<keyword id="KW-0488">Methylation</keyword>
<keyword id="KW-0539">Nucleus</keyword>
<keyword id="KW-0597">Phosphoprotein</keyword>
<keyword id="KW-1185">Reference proteome</keyword>
<keyword id="KW-0804">Transcription</keyword>
<keyword id="KW-0805">Transcription regulation</keyword>
<sequence>MADVLSVGVNLEAFAQAISAIQALRSSVSRVFDCLKDGMRNKETLEGREKAFIAHFQDNLHSVNRDLNELERLSNLVGKPSENHPLHNSGLLSLDPVQDKTPLYSQLLQAYKWSNKLQYHAGLASGLLNQQSLKRSANQMGVSAKRRPKAQPTTLVLPPQYVDDVISRIDRMFPEMTIHLSRPNGTSAMLLVTLGKVLKVIVVMRSLFIDRTIVKGYNENVYTEDGKLDIWSKSNYQVFQKVTDHATTALLHYQLPQMPDVVVRSFMTWLRSYIKLFQAPCQRCGKFLQDGLPPTWRDFRTLEAFHDTCRQ</sequence>
<name>MED27_BOVIN</name>
<accession>Q2TBN7</accession>
<dbReference type="EMBL" id="BC109883">
    <property type="protein sequence ID" value="AAI09884.1"/>
    <property type="molecule type" value="mRNA"/>
</dbReference>
<dbReference type="RefSeq" id="NP_001035636.1">
    <property type="nucleotide sequence ID" value="NM_001040546.2"/>
</dbReference>
<dbReference type="SMR" id="Q2TBN7"/>
<dbReference type="FunCoup" id="Q2TBN7">
    <property type="interactions" value="4774"/>
</dbReference>
<dbReference type="STRING" id="9913.ENSBTAP00000000493"/>
<dbReference type="PaxDb" id="9913-ENSBTAP00000000493"/>
<dbReference type="Ensembl" id="ENSBTAT00000100749.1">
    <property type="protein sequence ID" value="ENSBTAP00000075882.1"/>
    <property type="gene ID" value="ENSBTAG00000000382.5"/>
</dbReference>
<dbReference type="GeneID" id="525389"/>
<dbReference type="KEGG" id="bta:525389"/>
<dbReference type="CTD" id="9442"/>
<dbReference type="VEuPathDB" id="HostDB:ENSBTAG00000000382"/>
<dbReference type="VGNC" id="VGNC:31363">
    <property type="gene designation" value="MED27"/>
</dbReference>
<dbReference type="eggNOG" id="ENOG502QS6H">
    <property type="taxonomic scope" value="Eukaryota"/>
</dbReference>
<dbReference type="GeneTree" id="ENSGT00390000012207"/>
<dbReference type="HOGENOM" id="CLU_056015_0_0_1"/>
<dbReference type="InParanoid" id="Q2TBN7"/>
<dbReference type="OMA" id="FHEDCRN"/>
<dbReference type="OrthoDB" id="1868004at2759"/>
<dbReference type="TreeFam" id="TF323728"/>
<dbReference type="Reactome" id="R-BTA-212436">
    <property type="pathway name" value="Generic Transcription Pathway"/>
</dbReference>
<dbReference type="Reactome" id="R-BTA-9841922">
    <property type="pathway name" value="MLL4 and MLL3 complexes regulate expression of PPARG target genes in adipogenesis and hepatic steatosis"/>
</dbReference>
<dbReference type="Proteomes" id="UP000009136">
    <property type="component" value="Chromosome 11"/>
</dbReference>
<dbReference type="Bgee" id="ENSBTAG00000000382">
    <property type="expression patterns" value="Expressed in oocyte and 105 other cell types or tissues"/>
</dbReference>
<dbReference type="GO" id="GO:0070847">
    <property type="term" value="C:core mediator complex"/>
    <property type="evidence" value="ECO:0007669"/>
    <property type="project" value="Ensembl"/>
</dbReference>
<dbReference type="GO" id="GO:0005829">
    <property type="term" value="C:cytosol"/>
    <property type="evidence" value="ECO:0007669"/>
    <property type="project" value="Ensembl"/>
</dbReference>
<dbReference type="GO" id="GO:0016592">
    <property type="term" value="C:mediator complex"/>
    <property type="evidence" value="ECO:0000318"/>
    <property type="project" value="GO_Central"/>
</dbReference>
<dbReference type="GO" id="GO:0005730">
    <property type="term" value="C:nucleolus"/>
    <property type="evidence" value="ECO:0007669"/>
    <property type="project" value="Ensembl"/>
</dbReference>
<dbReference type="GO" id="GO:0005654">
    <property type="term" value="C:nucleoplasm"/>
    <property type="evidence" value="ECO:0007669"/>
    <property type="project" value="Ensembl"/>
</dbReference>
<dbReference type="GO" id="GO:0003713">
    <property type="term" value="F:transcription coactivator activity"/>
    <property type="evidence" value="ECO:0000318"/>
    <property type="project" value="GO_Central"/>
</dbReference>
<dbReference type="GO" id="GO:0006357">
    <property type="term" value="P:regulation of transcription by RNA polymerase II"/>
    <property type="evidence" value="ECO:0000318"/>
    <property type="project" value="GO_Central"/>
</dbReference>
<dbReference type="GO" id="GO:0035019">
    <property type="term" value="P:somatic stem cell population maintenance"/>
    <property type="evidence" value="ECO:0007669"/>
    <property type="project" value="Ensembl"/>
</dbReference>
<dbReference type="InterPro" id="IPR021627">
    <property type="entry name" value="Mediator_Med27"/>
</dbReference>
<dbReference type="PANTHER" id="PTHR13130">
    <property type="entry name" value="34 KDA TRANSCRIPTIONAL CO-ACTIVATOR-RELATED"/>
    <property type="match status" value="1"/>
</dbReference>
<dbReference type="PANTHER" id="PTHR13130:SF4">
    <property type="entry name" value="MEDIATOR OF RNA POLYMERASE II TRANSCRIPTION SUBUNIT 27"/>
    <property type="match status" value="1"/>
</dbReference>
<dbReference type="Pfam" id="PF11571">
    <property type="entry name" value="Med27"/>
    <property type="match status" value="1"/>
</dbReference>
<evidence type="ECO:0000250" key="1"/>
<evidence type="ECO:0000250" key="2">
    <source>
        <dbReference type="UniProtKB" id="Q6P2C8"/>
    </source>
</evidence>
<evidence type="ECO:0000305" key="3"/>
<feature type="chain" id="PRO_0000293485" description="Mediator of RNA polymerase II transcription subunit 27">
    <location>
        <begin position="1"/>
        <end position="311"/>
    </location>
</feature>
<feature type="modified residue" description="Phosphoserine" evidence="2">
    <location>
        <position position="132"/>
    </location>
</feature>
<feature type="modified residue" description="N6-methyllysine" evidence="2">
    <location>
        <position position="134"/>
    </location>
</feature>